<reference key="1">
    <citation type="journal article" date="2005" name="Nature">
        <title>The genome of the social amoeba Dictyostelium discoideum.</title>
        <authorList>
            <person name="Eichinger L."/>
            <person name="Pachebat J.A."/>
            <person name="Gloeckner G."/>
            <person name="Rajandream M.A."/>
            <person name="Sucgang R."/>
            <person name="Berriman M."/>
            <person name="Song J."/>
            <person name="Olsen R."/>
            <person name="Szafranski K."/>
            <person name="Xu Q."/>
            <person name="Tunggal B."/>
            <person name="Kummerfeld S."/>
            <person name="Madera M."/>
            <person name="Konfortov B.A."/>
            <person name="Rivero F."/>
            <person name="Bankier A.T."/>
            <person name="Lehmann R."/>
            <person name="Hamlin N."/>
            <person name="Davies R."/>
            <person name="Gaudet P."/>
            <person name="Fey P."/>
            <person name="Pilcher K."/>
            <person name="Chen G."/>
            <person name="Saunders D."/>
            <person name="Sodergren E.J."/>
            <person name="Davis P."/>
            <person name="Kerhornou A."/>
            <person name="Nie X."/>
            <person name="Hall N."/>
            <person name="Anjard C."/>
            <person name="Hemphill L."/>
            <person name="Bason N."/>
            <person name="Farbrother P."/>
            <person name="Desany B."/>
            <person name="Just E."/>
            <person name="Morio T."/>
            <person name="Rost R."/>
            <person name="Churcher C.M."/>
            <person name="Cooper J."/>
            <person name="Haydock S."/>
            <person name="van Driessche N."/>
            <person name="Cronin A."/>
            <person name="Goodhead I."/>
            <person name="Muzny D.M."/>
            <person name="Mourier T."/>
            <person name="Pain A."/>
            <person name="Lu M."/>
            <person name="Harper D."/>
            <person name="Lindsay R."/>
            <person name="Hauser H."/>
            <person name="James K.D."/>
            <person name="Quiles M."/>
            <person name="Madan Babu M."/>
            <person name="Saito T."/>
            <person name="Buchrieser C."/>
            <person name="Wardroper A."/>
            <person name="Felder M."/>
            <person name="Thangavelu M."/>
            <person name="Johnson D."/>
            <person name="Knights A."/>
            <person name="Loulseged H."/>
            <person name="Mungall K.L."/>
            <person name="Oliver K."/>
            <person name="Price C."/>
            <person name="Quail M.A."/>
            <person name="Urushihara H."/>
            <person name="Hernandez J."/>
            <person name="Rabbinowitsch E."/>
            <person name="Steffen D."/>
            <person name="Sanders M."/>
            <person name="Ma J."/>
            <person name="Kohara Y."/>
            <person name="Sharp S."/>
            <person name="Simmonds M.N."/>
            <person name="Spiegler S."/>
            <person name="Tivey A."/>
            <person name="Sugano S."/>
            <person name="White B."/>
            <person name="Walker D."/>
            <person name="Woodward J.R."/>
            <person name="Winckler T."/>
            <person name="Tanaka Y."/>
            <person name="Shaulsky G."/>
            <person name="Schleicher M."/>
            <person name="Weinstock G.M."/>
            <person name="Rosenthal A."/>
            <person name="Cox E.C."/>
            <person name="Chisholm R.L."/>
            <person name="Gibbs R.A."/>
            <person name="Loomis W.F."/>
            <person name="Platzer M."/>
            <person name="Kay R.R."/>
            <person name="Williams J.G."/>
            <person name="Dear P.H."/>
            <person name="Noegel A.A."/>
            <person name="Barrell B.G."/>
            <person name="Kuspa A."/>
        </authorList>
    </citation>
    <scope>NUCLEOTIDE SEQUENCE [LARGE SCALE GENOMIC DNA]</scope>
    <source>
        <strain>AX4</strain>
    </source>
</reference>
<feature type="chain" id="PRO_0000327561" description="Probable replication factor C subunit 3">
    <location>
        <begin position="1"/>
        <end position="347"/>
    </location>
</feature>
<comment type="function">
    <text evidence="1">The elongation of primed DNA templates by DNA polymerase delta and epsilon requires the action of the accessory proteins PCNA and activator 1.</text>
</comment>
<comment type="subunit">
    <text>Heteropentamer of various rfc subunits that forms a complex (RFC) with PCNA in the presence of ATP.</text>
</comment>
<comment type="subcellular location">
    <subcellularLocation>
        <location evidence="1">Nucleus</location>
    </subcellularLocation>
</comment>
<comment type="similarity">
    <text evidence="2">Belongs to the activator 1 small subunits family.</text>
</comment>
<protein>
    <recommendedName>
        <fullName>Probable replication factor C subunit 3</fullName>
    </recommendedName>
    <alternativeName>
        <fullName>Activator 1 subunit 3</fullName>
    </alternativeName>
</protein>
<dbReference type="EMBL" id="AAFI02000218">
    <property type="protein sequence ID" value="EAL60663.1"/>
    <property type="molecule type" value="Genomic_DNA"/>
</dbReference>
<dbReference type="RefSeq" id="XP_628996.1">
    <property type="nucleotide sequence ID" value="XM_628994.1"/>
</dbReference>
<dbReference type="SMR" id="Q54BN3"/>
<dbReference type="FunCoup" id="Q54BN3">
    <property type="interactions" value="710"/>
</dbReference>
<dbReference type="STRING" id="44689.Q54BN3"/>
<dbReference type="PaxDb" id="44689-DDB0232232"/>
<dbReference type="EnsemblProtists" id="EAL60663">
    <property type="protein sequence ID" value="EAL60663"/>
    <property type="gene ID" value="DDB_G0293702"/>
</dbReference>
<dbReference type="GeneID" id="8629280"/>
<dbReference type="KEGG" id="ddi:DDB_G0293702"/>
<dbReference type="dictyBase" id="DDB_G0293702">
    <property type="gene designation" value="rfc3"/>
</dbReference>
<dbReference type="VEuPathDB" id="AmoebaDB:DDB_G0293702"/>
<dbReference type="eggNOG" id="KOG2035">
    <property type="taxonomic scope" value="Eukaryota"/>
</dbReference>
<dbReference type="HOGENOM" id="CLU_042324_5_0_1"/>
<dbReference type="InParanoid" id="Q54BN3"/>
<dbReference type="OMA" id="LKADIMH"/>
<dbReference type="PhylomeDB" id="Q54BN3"/>
<dbReference type="Reactome" id="R-DDI-110314">
    <property type="pathway name" value="Recognition of DNA damage by PCNA-containing replication complex"/>
</dbReference>
<dbReference type="Reactome" id="R-DDI-176187">
    <property type="pathway name" value="Activation of ATR in response to replication stress"/>
</dbReference>
<dbReference type="Reactome" id="R-DDI-5651801">
    <property type="pathway name" value="PCNA-Dependent Long Patch Base Excision Repair"/>
</dbReference>
<dbReference type="Reactome" id="R-DDI-5655862">
    <property type="pathway name" value="Translesion synthesis by POLK"/>
</dbReference>
<dbReference type="Reactome" id="R-DDI-5656169">
    <property type="pathway name" value="Termination of translesion DNA synthesis"/>
</dbReference>
<dbReference type="Reactome" id="R-DDI-5696397">
    <property type="pathway name" value="Gap-filling DNA repair synthesis and ligation in GG-NER"/>
</dbReference>
<dbReference type="Reactome" id="R-DDI-6782135">
    <property type="pathway name" value="Dual incision in TC-NER"/>
</dbReference>
<dbReference type="Reactome" id="R-DDI-6782210">
    <property type="pathway name" value="Gap-filling DNA repair synthesis and ligation in TC-NER"/>
</dbReference>
<dbReference type="Reactome" id="R-DDI-69091">
    <property type="pathway name" value="Polymerase switching"/>
</dbReference>
<dbReference type="PRO" id="PR:Q54BN3"/>
<dbReference type="Proteomes" id="UP000002195">
    <property type="component" value="Chromosome 6"/>
</dbReference>
<dbReference type="GO" id="GO:0005663">
    <property type="term" value="C:DNA replication factor C complex"/>
    <property type="evidence" value="ECO:0000250"/>
    <property type="project" value="dictyBase"/>
</dbReference>
<dbReference type="GO" id="GO:0031391">
    <property type="term" value="C:Elg1 RFC-like complex"/>
    <property type="evidence" value="ECO:0000250"/>
    <property type="project" value="dictyBase"/>
</dbReference>
<dbReference type="GO" id="GO:0005634">
    <property type="term" value="C:nucleus"/>
    <property type="evidence" value="ECO:0000318"/>
    <property type="project" value="GO_Central"/>
</dbReference>
<dbReference type="GO" id="GO:0016887">
    <property type="term" value="F:ATP hydrolysis activity"/>
    <property type="evidence" value="ECO:0007669"/>
    <property type="project" value="InterPro"/>
</dbReference>
<dbReference type="GO" id="GO:0003677">
    <property type="term" value="F:DNA binding"/>
    <property type="evidence" value="ECO:0007669"/>
    <property type="project" value="UniProtKB-KW"/>
</dbReference>
<dbReference type="GO" id="GO:0003689">
    <property type="term" value="F:DNA clamp loader activity"/>
    <property type="evidence" value="ECO:0000250"/>
    <property type="project" value="dictyBase"/>
</dbReference>
<dbReference type="GO" id="GO:0006281">
    <property type="term" value="P:DNA repair"/>
    <property type="evidence" value="ECO:0000318"/>
    <property type="project" value="GO_Central"/>
</dbReference>
<dbReference type="GO" id="GO:0006261">
    <property type="term" value="P:DNA-templated DNA replication"/>
    <property type="evidence" value="ECO:0000318"/>
    <property type="project" value="GO_Central"/>
</dbReference>
<dbReference type="GO" id="GO:0006272">
    <property type="term" value="P:leading strand elongation"/>
    <property type="evidence" value="ECO:0000250"/>
    <property type="project" value="dictyBase"/>
</dbReference>
<dbReference type="CDD" id="cd00009">
    <property type="entry name" value="AAA"/>
    <property type="match status" value="1"/>
</dbReference>
<dbReference type="FunFam" id="1.20.272.10:FF:000002">
    <property type="entry name" value="Replication factor C subunit 3"/>
    <property type="match status" value="1"/>
</dbReference>
<dbReference type="FunFam" id="1.10.8.60:FF:000030">
    <property type="entry name" value="replication factor C subunit 3"/>
    <property type="match status" value="1"/>
</dbReference>
<dbReference type="FunFam" id="3.40.50.300:FF:000136">
    <property type="entry name" value="Replication factor C subunit 5"/>
    <property type="match status" value="1"/>
</dbReference>
<dbReference type="Gene3D" id="1.10.8.60">
    <property type="match status" value="1"/>
</dbReference>
<dbReference type="Gene3D" id="1.20.272.10">
    <property type="match status" value="1"/>
</dbReference>
<dbReference type="Gene3D" id="3.40.50.300">
    <property type="entry name" value="P-loop containing nucleotide triphosphate hydrolases"/>
    <property type="match status" value="1"/>
</dbReference>
<dbReference type="InterPro" id="IPR003593">
    <property type="entry name" value="AAA+_ATPase"/>
</dbReference>
<dbReference type="InterPro" id="IPR008921">
    <property type="entry name" value="DNA_pol3_clamp-load_cplx_C"/>
</dbReference>
<dbReference type="InterPro" id="IPR050238">
    <property type="entry name" value="DNA_Rep/Repair_Clamp_Loader"/>
</dbReference>
<dbReference type="InterPro" id="IPR027417">
    <property type="entry name" value="P-loop_NTPase"/>
</dbReference>
<dbReference type="PANTHER" id="PTHR11669">
    <property type="entry name" value="REPLICATION FACTOR C / DNA POLYMERASE III GAMMA-TAU SUBUNIT"/>
    <property type="match status" value="1"/>
</dbReference>
<dbReference type="PANTHER" id="PTHR11669:SF1">
    <property type="entry name" value="REPLICATION FACTOR C SUBUNIT 3"/>
    <property type="match status" value="1"/>
</dbReference>
<dbReference type="Pfam" id="PF13177">
    <property type="entry name" value="DNA_pol3_delta2"/>
    <property type="match status" value="1"/>
</dbReference>
<dbReference type="Pfam" id="PF21960">
    <property type="entry name" value="RCF1-5-like_lid"/>
    <property type="match status" value="1"/>
</dbReference>
<dbReference type="Pfam" id="PF22534">
    <property type="entry name" value="RFC_C"/>
    <property type="match status" value="1"/>
</dbReference>
<dbReference type="SMART" id="SM00382">
    <property type="entry name" value="AAA"/>
    <property type="match status" value="1"/>
</dbReference>
<dbReference type="SUPFAM" id="SSF52540">
    <property type="entry name" value="P-loop containing nucleoside triphosphate hydrolases"/>
    <property type="match status" value="1"/>
</dbReference>
<dbReference type="SUPFAM" id="SSF48019">
    <property type="entry name" value="post-AAA+ oligomerization domain-like"/>
    <property type="match status" value="1"/>
</dbReference>
<keyword id="KW-0235">DNA replication</keyword>
<keyword id="KW-0238">DNA-binding</keyword>
<keyword id="KW-0539">Nucleus</keyword>
<keyword id="KW-1185">Reference proteome</keyword>
<organism>
    <name type="scientific">Dictyostelium discoideum</name>
    <name type="common">Social amoeba</name>
    <dbReference type="NCBI Taxonomy" id="44689"/>
    <lineage>
        <taxon>Eukaryota</taxon>
        <taxon>Amoebozoa</taxon>
        <taxon>Evosea</taxon>
        <taxon>Eumycetozoa</taxon>
        <taxon>Dictyostelia</taxon>
        <taxon>Dictyosteliales</taxon>
        <taxon>Dictyosteliaceae</taxon>
        <taxon>Dictyostelium</taxon>
    </lineage>
</organism>
<sequence>MLWIDKYKPTSLDKMDYHNDISINLKNMIKSGDFPHLLVYGPSGAGKKTRILAVLQEIYGPNALKLKIDHRTFKHPTSSKNIQITTISSHYHIEINPGEAGSYDRVVIQTIIKEIAQSPPIDSGSLGAFKIVILNEVDKLSKDAQHALRRTMEKYATFCRLILCCDSTAKVIDPIKSRCLGIRVPAPSQEEIEKVLAKVATAEKFDLPSKLAVNVAKQSGGNLRYALMLLESQKAKQYPFQSTELPLLDWENYISQIVKDCFEEQSPARLSIVRGKLYELLGHCIPPELIFKTLLLEIFKKLDHNMKFEIIHWASYYEHRSQIGSKPIFHLEAFIAKFMSVYKKYNQ</sequence>
<name>RFC3_DICDI</name>
<accession>Q54BN3</accession>
<evidence type="ECO:0000250" key="1"/>
<evidence type="ECO:0000305" key="2"/>
<gene>
    <name type="primary">rfc3</name>
    <name type="ORF">DDB_G0293702</name>
</gene>
<proteinExistence type="inferred from homology"/>